<name>DNLJ_GLOC7</name>
<sequence length="678" mass="76232">MPSATPEIKQRVDQLRSQLQKASYAYYVLDNPIMEDVVYDQLYRELQNIETQYPELITPDSPTQRVGDKLSEQFISVNHNIPLYSLENAFNLQEFARWQERWQRLTPDVTQFEYVCELKIDGSAIALTYENGLLVRGVTRGDGIVGEEITPNIKTIRSIPLKLALDNPPVRIEVRGEAFLPIEEFERINQEKQTAGESLFANPRNAAAGTLRQLDPRIVDRRRLQFFAYTLYVIDSPSTPTTQWESLEDLQQMGFLVNPNRKLCQSEAEVDQYYQLWDTERHNLPYMTDGVVVKLNDYQLQQQLGFTQKFPRWAIALKYPAEEAPTQVKNITVNVGRTGAVTPMAIMEPVQLAGTTVQKATLHNSDRVAQLDIRVGDTVIIRKAGEIIPEVVRVIEELRPPNTQPYQMPTQCPECHSTLVRPKGEAVTRCVNSSCPAILRGSLVHWCSRDALDIRGLGEKVVILLIDNGLVHSIADLYHLKVEQIASLERMGTKSANNLINAINKSKQQPWSRVLYGLGIRYVGSVTAKLLSDNFKSVEQLSQASFTSLESVYGIGAEIAQSVYDWFKIEANQTLIKNLQQAELQFETLSETPKYPPISSTPLAGKTVVITGTLPSLKRNEAQELIEKAGGKVTNSVSSKTDYLLVGEDAGSKLTKAQQLGISQLSEEQLLKMINPQE</sequence>
<comment type="function">
    <text evidence="1">DNA ligase that catalyzes the formation of phosphodiester linkages between 5'-phosphoryl and 3'-hydroxyl groups in double-stranded DNA using NAD as a coenzyme and as the energy source for the reaction. It is essential for DNA replication and repair of damaged DNA.</text>
</comment>
<comment type="catalytic activity">
    <reaction evidence="1">
        <text>NAD(+) + (deoxyribonucleotide)n-3'-hydroxyl + 5'-phospho-(deoxyribonucleotide)m = (deoxyribonucleotide)n+m + AMP + beta-nicotinamide D-nucleotide.</text>
        <dbReference type="EC" id="6.5.1.2"/>
    </reaction>
</comment>
<comment type="cofactor">
    <cofactor evidence="1">
        <name>Mg(2+)</name>
        <dbReference type="ChEBI" id="CHEBI:18420"/>
    </cofactor>
    <cofactor evidence="1">
        <name>Mn(2+)</name>
        <dbReference type="ChEBI" id="CHEBI:29035"/>
    </cofactor>
</comment>
<comment type="similarity">
    <text evidence="1">Belongs to the NAD-dependent DNA ligase family. LigA subfamily.</text>
</comment>
<gene>
    <name evidence="1" type="primary">ligA</name>
    <name type="ordered locus">PCC7424_2883</name>
</gene>
<protein>
    <recommendedName>
        <fullName evidence="1">DNA ligase</fullName>
        <ecNumber evidence="1">6.5.1.2</ecNumber>
    </recommendedName>
    <alternativeName>
        <fullName evidence="1">Polydeoxyribonucleotide synthase [NAD(+)]</fullName>
    </alternativeName>
</protein>
<proteinExistence type="inferred from homology"/>
<organism>
    <name type="scientific">Gloeothece citriformis (strain PCC 7424)</name>
    <name type="common">Cyanothece sp. (strain PCC 7424)</name>
    <dbReference type="NCBI Taxonomy" id="65393"/>
    <lineage>
        <taxon>Bacteria</taxon>
        <taxon>Bacillati</taxon>
        <taxon>Cyanobacteriota</taxon>
        <taxon>Cyanophyceae</taxon>
        <taxon>Oscillatoriophycideae</taxon>
        <taxon>Chroococcales</taxon>
        <taxon>Aphanothecaceae</taxon>
        <taxon>Gloeothece</taxon>
        <taxon>Gloeothece citriformis</taxon>
    </lineage>
</organism>
<reference key="1">
    <citation type="journal article" date="2011" name="MBio">
        <title>Novel metabolic attributes of the genus Cyanothece, comprising a group of unicellular nitrogen-fixing Cyanobacteria.</title>
        <authorList>
            <person name="Bandyopadhyay A."/>
            <person name="Elvitigala T."/>
            <person name="Welsh E."/>
            <person name="Stockel J."/>
            <person name="Liberton M."/>
            <person name="Min H."/>
            <person name="Sherman L.A."/>
            <person name="Pakrasi H.B."/>
        </authorList>
    </citation>
    <scope>NUCLEOTIDE SEQUENCE [LARGE SCALE GENOMIC DNA]</scope>
    <source>
        <strain>PCC 7424</strain>
    </source>
</reference>
<dbReference type="EC" id="6.5.1.2" evidence="1"/>
<dbReference type="EMBL" id="CP001291">
    <property type="protein sequence ID" value="ACK71288.1"/>
    <property type="molecule type" value="Genomic_DNA"/>
</dbReference>
<dbReference type="RefSeq" id="WP_015954888.1">
    <property type="nucleotide sequence ID" value="NC_011729.1"/>
</dbReference>
<dbReference type="SMR" id="B7K8U0"/>
<dbReference type="STRING" id="65393.PCC7424_2883"/>
<dbReference type="KEGG" id="cyc:PCC7424_2883"/>
<dbReference type="eggNOG" id="COG0272">
    <property type="taxonomic scope" value="Bacteria"/>
</dbReference>
<dbReference type="HOGENOM" id="CLU_007764_2_1_3"/>
<dbReference type="OrthoDB" id="9759736at2"/>
<dbReference type="Proteomes" id="UP000002384">
    <property type="component" value="Chromosome"/>
</dbReference>
<dbReference type="GO" id="GO:0005829">
    <property type="term" value="C:cytosol"/>
    <property type="evidence" value="ECO:0007669"/>
    <property type="project" value="TreeGrafter"/>
</dbReference>
<dbReference type="GO" id="GO:0003677">
    <property type="term" value="F:DNA binding"/>
    <property type="evidence" value="ECO:0007669"/>
    <property type="project" value="InterPro"/>
</dbReference>
<dbReference type="GO" id="GO:0003911">
    <property type="term" value="F:DNA ligase (NAD+) activity"/>
    <property type="evidence" value="ECO:0007669"/>
    <property type="project" value="UniProtKB-UniRule"/>
</dbReference>
<dbReference type="GO" id="GO:0046872">
    <property type="term" value="F:metal ion binding"/>
    <property type="evidence" value="ECO:0007669"/>
    <property type="project" value="UniProtKB-KW"/>
</dbReference>
<dbReference type="GO" id="GO:0006281">
    <property type="term" value="P:DNA repair"/>
    <property type="evidence" value="ECO:0007669"/>
    <property type="project" value="UniProtKB-KW"/>
</dbReference>
<dbReference type="GO" id="GO:0006260">
    <property type="term" value="P:DNA replication"/>
    <property type="evidence" value="ECO:0007669"/>
    <property type="project" value="UniProtKB-KW"/>
</dbReference>
<dbReference type="CDD" id="cd17748">
    <property type="entry name" value="BRCT_DNA_ligase_like"/>
    <property type="match status" value="1"/>
</dbReference>
<dbReference type="CDD" id="cd00114">
    <property type="entry name" value="LIGANc"/>
    <property type="match status" value="1"/>
</dbReference>
<dbReference type="FunFam" id="1.10.150.20:FF:000006">
    <property type="entry name" value="DNA ligase"/>
    <property type="match status" value="1"/>
</dbReference>
<dbReference type="FunFam" id="1.10.150.20:FF:000007">
    <property type="entry name" value="DNA ligase"/>
    <property type="match status" value="1"/>
</dbReference>
<dbReference type="FunFam" id="1.10.287.610:FF:000002">
    <property type="entry name" value="DNA ligase"/>
    <property type="match status" value="1"/>
</dbReference>
<dbReference type="FunFam" id="2.40.50.140:FF:000012">
    <property type="entry name" value="DNA ligase"/>
    <property type="match status" value="1"/>
</dbReference>
<dbReference type="FunFam" id="3.30.470.30:FF:000001">
    <property type="entry name" value="DNA ligase"/>
    <property type="match status" value="1"/>
</dbReference>
<dbReference type="Gene3D" id="6.20.10.30">
    <property type="match status" value="1"/>
</dbReference>
<dbReference type="Gene3D" id="1.10.150.20">
    <property type="entry name" value="5' to 3' exonuclease, C-terminal subdomain"/>
    <property type="match status" value="2"/>
</dbReference>
<dbReference type="Gene3D" id="3.40.50.10190">
    <property type="entry name" value="BRCT domain"/>
    <property type="match status" value="1"/>
</dbReference>
<dbReference type="Gene3D" id="3.30.470.30">
    <property type="entry name" value="DNA ligase/mRNA capping enzyme"/>
    <property type="match status" value="1"/>
</dbReference>
<dbReference type="Gene3D" id="1.10.287.610">
    <property type="entry name" value="Helix hairpin bin"/>
    <property type="match status" value="1"/>
</dbReference>
<dbReference type="Gene3D" id="2.40.50.140">
    <property type="entry name" value="Nucleic acid-binding proteins"/>
    <property type="match status" value="1"/>
</dbReference>
<dbReference type="HAMAP" id="MF_01588">
    <property type="entry name" value="DNA_ligase_A"/>
    <property type="match status" value="1"/>
</dbReference>
<dbReference type="InterPro" id="IPR001357">
    <property type="entry name" value="BRCT_dom"/>
</dbReference>
<dbReference type="InterPro" id="IPR036420">
    <property type="entry name" value="BRCT_dom_sf"/>
</dbReference>
<dbReference type="InterPro" id="IPR041663">
    <property type="entry name" value="DisA/LigA_HHH"/>
</dbReference>
<dbReference type="InterPro" id="IPR001679">
    <property type="entry name" value="DNA_ligase"/>
</dbReference>
<dbReference type="InterPro" id="IPR018239">
    <property type="entry name" value="DNA_ligase_AS"/>
</dbReference>
<dbReference type="InterPro" id="IPR013839">
    <property type="entry name" value="DNAligase_adenylation"/>
</dbReference>
<dbReference type="InterPro" id="IPR013840">
    <property type="entry name" value="DNAligase_N"/>
</dbReference>
<dbReference type="InterPro" id="IPR003583">
    <property type="entry name" value="Hlx-hairpin-Hlx_DNA-bd_motif"/>
</dbReference>
<dbReference type="InterPro" id="IPR012340">
    <property type="entry name" value="NA-bd_OB-fold"/>
</dbReference>
<dbReference type="InterPro" id="IPR004150">
    <property type="entry name" value="NAD_DNA_ligase_OB"/>
</dbReference>
<dbReference type="InterPro" id="IPR010994">
    <property type="entry name" value="RuvA_2-like"/>
</dbReference>
<dbReference type="InterPro" id="IPR004149">
    <property type="entry name" value="Znf_DNAligase_C4"/>
</dbReference>
<dbReference type="NCBIfam" id="TIGR00575">
    <property type="entry name" value="dnlj"/>
    <property type="match status" value="1"/>
</dbReference>
<dbReference type="NCBIfam" id="NF005932">
    <property type="entry name" value="PRK07956.1"/>
    <property type="match status" value="1"/>
</dbReference>
<dbReference type="PANTHER" id="PTHR23389">
    <property type="entry name" value="CHROMOSOME TRANSMISSION FIDELITY FACTOR 18"/>
    <property type="match status" value="1"/>
</dbReference>
<dbReference type="PANTHER" id="PTHR23389:SF9">
    <property type="entry name" value="DNA LIGASE"/>
    <property type="match status" value="1"/>
</dbReference>
<dbReference type="Pfam" id="PF00533">
    <property type="entry name" value="BRCT"/>
    <property type="match status" value="1"/>
</dbReference>
<dbReference type="Pfam" id="PF01653">
    <property type="entry name" value="DNA_ligase_aden"/>
    <property type="match status" value="1"/>
</dbReference>
<dbReference type="Pfam" id="PF03120">
    <property type="entry name" value="DNA_ligase_OB"/>
    <property type="match status" value="1"/>
</dbReference>
<dbReference type="Pfam" id="PF03119">
    <property type="entry name" value="DNA_ligase_ZBD"/>
    <property type="match status" value="1"/>
</dbReference>
<dbReference type="Pfam" id="PF12826">
    <property type="entry name" value="HHH_2"/>
    <property type="match status" value="1"/>
</dbReference>
<dbReference type="Pfam" id="PF14520">
    <property type="entry name" value="HHH_5"/>
    <property type="match status" value="1"/>
</dbReference>
<dbReference type="Pfam" id="PF22745">
    <property type="entry name" value="Nlig-Ia"/>
    <property type="match status" value="1"/>
</dbReference>
<dbReference type="PIRSF" id="PIRSF001604">
    <property type="entry name" value="LigA"/>
    <property type="match status" value="1"/>
</dbReference>
<dbReference type="SMART" id="SM00292">
    <property type="entry name" value="BRCT"/>
    <property type="match status" value="1"/>
</dbReference>
<dbReference type="SMART" id="SM00278">
    <property type="entry name" value="HhH1"/>
    <property type="match status" value="3"/>
</dbReference>
<dbReference type="SMART" id="SM00532">
    <property type="entry name" value="LIGANc"/>
    <property type="match status" value="1"/>
</dbReference>
<dbReference type="SUPFAM" id="SSF52113">
    <property type="entry name" value="BRCT domain"/>
    <property type="match status" value="1"/>
</dbReference>
<dbReference type="SUPFAM" id="SSF56091">
    <property type="entry name" value="DNA ligase/mRNA capping enzyme, catalytic domain"/>
    <property type="match status" value="1"/>
</dbReference>
<dbReference type="SUPFAM" id="SSF50249">
    <property type="entry name" value="Nucleic acid-binding proteins"/>
    <property type="match status" value="1"/>
</dbReference>
<dbReference type="SUPFAM" id="SSF47781">
    <property type="entry name" value="RuvA domain 2-like"/>
    <property type="match status" value="1"/>
</dbReference>
<dbReference type="PROSITE" id="PS50172">
    <property type="entry name" value="BRCT"/>
    <property type="match status" value="1"/>
</dbReference>
<dbReference type="PROSITE" id="PS01055">
    <property type="entry name" value="DNA_LIGASE_N1"/>
    <property type="match status" value="1"/>
</dbReference>
<accession>B7K8U0</accession>
<feature type="chain" id="PRO_0000380355" description="DNA ligase">
    <location>
        <begin position="1"/>
        <end position="678"/>
    </location>
</feature>
<feature type="domain" description="BRCT" evidence="1">
    <location>
        <begin position="598"/>
        <end position="678"/>
    </location>
</feature>
<feature type="active site" description="N6-AMP-lysine intermediate" evidence="1">
    <location>
        <position position="119"/>
    </location>
</feature>
<feature type="binding site" evidence="1">
    <location>
        <begin position="36"/>
        <end position="40"/>
    </location>
    <ligand>
        <name>NAD(+)</name>
        <dbReference type="ChEBI" id="CHEBI:57540"/>
    </ligand>
</feature>
<feature type="binding site" evidence="1">
    <location>
        <begin position="85"/>
        <end position="86"/>
    </location>
    <ligand>
        <name>NAD(+)</name>
        <dbReference type="ChEBI" id="CHEBI:57540"/>
    </ligand>
</feature>
<feature type="binding site" evidence="1">
    <location>
        <position position="117"/>
    </location>
    <ligand>
        <name>NAD(+)</name>
        <dbReference type="ChEBI" id="CHEBI:57540"/>
    </ligand>
</feature>
<feature type="binding site" evidence="1">
    <location>
        <position position="140"/>
    </location>
    <ligand>
        <name>NAD(+)</name>
        <dbReference type="ChEBI" id="CHEBI:57540"/>
    </ligand>
</feature>
<feature type="binding site" evidence="1">
    <location>
        <position position="177"/>
    </location>
    <ligand>
        <name>NAD(+)</name>
        <dbReference type="ChEBI" id="CHEBI:57540"/>
    </ligand>
</feature>
<feature type="binding site" evidence="1">
    <location>
        <position position="294"/>
    </location>
    <ligand>
        <name>NAD(+)</name>
        <dbReference type="ChEBI" id="CHEBI:57540"/>
    </ligand>
</feature>
<feature type="binding site" evidence="1">
    <location>
        <position position="318"/>
    </location>
    <ligand>
        <name>NAD(+)</name>
        <dbReference type="ChEBI" id="CHEBI:57540"/>
    </ligand>
</feature>
<feature type="binding site" evidence="1">
    <location>
        <position position="412"/>
    </location>
    <ligand>
        <name>Zn(2+)</name>
        <dbReference type="ChEBI" id="CHEBI:29105"/>
    </ligand>
</feature>
<feature type="binding site" evidence="1">
    <location>
        <position position="415"/>
    </location>
    <ligand>
        <name>Zn(2+)</name>
        <dbReference type="ChEBI" id="CHEBI:29105"/>
    </ligand>
</feature>
<feature type="binding site" evidence="1">
    <location>
        <position position="430"/>
    </location>
    <ligand>
        <name>Zn(2+)</name>
        <dbReference type="ChEBI" id="CHEBI:29105"/>
    </ligand>
</feature>
<feature type="binding site" evidence="1">
    <location>
        <position position="435"/>
    </location>
    <ligand>
        <name>Zn(2+)</name>
        <dbReference type="ChEBI" id="CHEBI:29105"/>
    </ligand>
</feature>
<keyword id="KW-0227">DNA damage</keyword>
<keyword id="KW-0234">DNA repair</keyword>
<keyword id="KW-0235">DNA replication</keyword>
<keyword id="KW-0436">Ligase</keyword>
<keyword id="KW-0460">Magnesium</keyword>
<keyword id="KW-0464">Manganese</keyword>
<keyword id="KW-0479">Metal-binding</keyword>
<keyword id="KW-0520">NAD</keyword>
<keyword id="KW-1185">Reference proteome</keyword>
<keyword id="KW-0862">Zinc</keyword>
<evidence type="ECO:0000255" key="1">
    <source>
        <dbReference type="HAMAP-Rule" id="MF_01588"/>
    </source>
</evidence>